<evidence type="ECO:0000255" key="1">
    <source>
        <dbReference type="HAMAP-Rule" id="MF_00050"/>
    </source>
</evidence>
<evidence type="ECO:0000305" key="2"/>
<sequence>MAEITAKLVKELREKSGAGVMDAKKALVEVDGDIEKAIELLREKGMAKAAKKADRIAAEGLTGIYVSGNVAAVVEVNAETDFVAKNAQFVELVNETAKVIAEGKPANNEEALALTMPSGETLEAAYVTATATIGEKISLRRFAVVEKTDAQHFGAYQHNGGRIGVVSVIEGGDEAIAKQISMHIAAMKPTVLSYSELDEQFVKDELAQLNHAIDQDNESRAMVNKPALPHLKYGSKAQLTDEVIAQAEEDIKAELAAEGKPEKIWDKIIPGKMDRFILDNTKVDQAYTLLAQVYIMDDSKTVEAYLESVNASVVEFVRFEVGEGIEKASNDFESEVAATMAAALNN</sequence>
<gene>
    <name evidence="1" type="primary">tsf</name>
    <name type="ordered locus">str0074</name>
</gene>
<name>EFTS_STRT1</name>
<keyword id="KW-0963">Cytoplasm</keyword>
<keyword id="KW-0251">Elongation factor</keyword>
<keyword id="KW-0648">Protein biosynthesis</keyword>
<accession>Q5M1X4</accession>
<dbReference type="EMBL" id="CP000024">
    <property type="protein sequence ID" value="AAV61690.1"/>
    <property type="status" value="ALT_INIT"/>
    <property type="molecule type" value="Genomic_DNA"/>
</dbReference>
<dbReference type="RefSeq" id="WP_002949105.1">
    <property type="nucleotide sequence ID" value="NC_006449.1"/>
</dbReference>
<dbReference type="SMR" id="Q5M1X4"/>
<dbReference type="GeneID" id="66898005"/>
<dbReference type="KEGG" id="stc:str0074"/>
<dbReference type="HOGENOM" id="CLU_047155_0_1_9"/>
<dbReference type="GO" id="GO:0005737">
    <property type="term" value="C:cytoplasm"/>
    <property type="evidence" value="ECO:0007669"/>
    <property type="project" value="UniProtKB-SubCell"/>
</dbReference>
<dbReference type="GO" id="GO:0003746">
    <property type="term" value="F:translation elongation factor activity"/>
    <property type="evidence" value="ECO:0007669"/>
    <property type="project" value="UniProtKB-UniRule"/>
</dbReference>
<dbReference type="CDD" id="cd14275">
    <property type="entry name" value="UBA_EF-Ts"/>
    <property type="match status" value="1"/>
</dbReference>
<dbReference type="FunFam" id="1.10.286.20:FF:000004">
    <property type="entry name" value="Elongation factor Ts"/>
    <property type="match status" value="1"/>
</dbReference>
<dbReference type="FunFam" id="1.10.8.10:FF:000001">
    <property type="entry name" value="Elongation factor Ts"/>
    <property type="match status" value="1"/>
</dbReference>
<dbReference type="FunFam" id="3.30.479.20:FF:000009">
    <property type="entry name" value="Elongation factor Ts"/>
    <property type="match status" value="1"/>
</dbReference>
<dbReference type="FunFam" id="3.30.479.20:FF:000013">
    <property type="entry name" value="Elongation factor Ts"/>
    <property type="match status" value="1"/>
</dbReference>
<dbReference type="Gene3D" id="1.10.286.20">
    <property type="match status" value="1"/>
</dbReference>
<dbReference type="Gene3D" id="1.10.8.10">
    <property type="entry name" value="DNA helicase RuvA subunit, C-terminal domain"/>
    <property type="match status" value="1"/>
</dbReference>
<dbReference type="Gene3D" id="3.30.479.20">
    <property type="entry name" value="Elongation factor Ts, dimerisation domain"/>
    <property type="match status" value="2"/>
</dbReference>
<dbReference type="HAMAP" id="MF_00050">
    <property type="entry name" value="EF_Ts"/>
    <property type="match status" value="1"/>
</dbReference>
<dbReference type="InterPro" id="IPR036402">
    <property type="entry name" value="EF-Ts_dimer_sf"/>
</dbReference>
<dbReference type="InterPro" id="IPR001816">
    <property type="entry name" value="Transl_elong_EFTs/EF1B"/>
</dbReference>
<dbReference type="InterPro" id="IPR014039">
    <property type="entry name" value="Transl_elong_EFTs/EF1B_dimer"/>
</dbReference>
<dbReference type="InterPro" id="IPR018101">
    <property type="entry name" value="Transl_elong_Ts_CS"/>
</dbReference>
<dbReference type="InterPro" id="IPR009060">
    <property type="entry name" value="UBA-like_sf"/>
</dbReference>
<dbReference type="NCBIfam" id="TIGR00116">
    <property type="entry name" value="tsf"/>
    <property type="match status" value="1"/>
</dbReference>
<dbReference type="PANTHER" id="PTHR11741">
    <property type="entry name" value="ELONGATION FACTOR TS"/>
    <property type="match status" value="1"/>
</dbReference>
<dbReference type="PANTHER" id="PTHR11741:SF0">
    <property type="entry name" value="ELONGATION FACTOR TS, MITOCHONDRIAL"/>
    <property type="match status" value="1"/>
</dbReference>
<dbReference type="Pfam" id="PF00889">
    <property type="entry name" value="EF_TS"/>
    <property type="match status" value="1"/>
</dbReference>
<dbReference type="SUPFAM" id="SSF54713">
    <property type="entry name" value="Elongation factor Ts (EF-Ts), dimerisation domain"/>
    <property type="match status" value="2"/>
</dbReference>
<dbReference type="SUPFAM" id="SSF46934">
    <property type="entry name" value="UBA-like"/>
    <property type="match status" value="1"/>
</dbReference>
<dbReference type="PROSITE" id="PS01126">
    <property type="entry name" value="EF_TS_1"/>
    <property type="match status" value="1"/>
</dbReference>
<dbReference type="PROSITE" id="PS01127">
    <property type="entry name" value="EF_TS_2"/>
    <property type="match status" value="1"/>
</dbReference>
<comment type="function">
    <text evidence="1">Associates with the EF-Tu.GDP complex and induces the exchange of GDP to GTP. It remains bound to the aminoacyl-tRNA.EF-Tu.GTP complex up to the GTP hydrolysis stage on the ribosome.</text>
</comment>
<comment type="subcellular location">
    <subcellularLocation>
        <location evidence="1">Cytoplasm</location>
    </subcellularLocation>
</comment>
<comment type="similarity">
    <text evidence="1">Belongs to the EF-Ts family.</text>
</comment>
<comment type="sequence caution" evidence="2">
    <conflict type="erroneous initiation">
        <sequence resource="EMBL-CDS" id="AAV61690"/>
    </conflict>
</comment>
<organism>
    <name type="scientific">Streptococcus thermophilus (strain CNRZ 1066)</name>
    <dbReference type="NCBI Taxonomy" id="299768"/>
    <lineage>
        <taxon>Bacteria</taxon>
        <taxon>Bacillati</taxon>
        <taxon>Bacillota</taxon>
        <taxon>Bacilli</taxon>
        <taxon>Lactobacillales</taxon>
        <taxon>Streptococcaceae</taxon>
        <taxon>Streptococcus</taxon>
    </lineage>
</organism>
<feature type="chain" id="PRO_0000241538" description="Elongation factor Ts">
    <location>
        <begin position="1"/>
        <end position="346"/>
    </location>
</feature>
<feature type="region of interest" description="Involved in Mg(2+) ion dislocation from EF-Tu" evidence="1">
    <location>
        <begin position="80"/>
        <end position="83"/>
    </location>
</feature>
<protein>
    <recommendedName>
        <fullName evidence="1">Elongation factor Ts</fullName>
        <shortName evidence="1">EF-Ts</shortName>
    </recommendedName>
</protein>
<proteinExistence type="inferred from homology"/>
<reference key="1">
    <citation type="journal article" date="2004" name="Nat. Biotechnol.">
        <title>Complete sequence and comparative genome analysis of the dairy bacterium Streptococcus thermophilus.</title>
        <authorList>
            <person name="Bolotin A."/>
            <person name="Quinquis B."/>
            <person name="Renault P."/>
            <person name="Sorokin A."/>
            <person name="Ehrlich S.D."/>
            <person name="Kulakauskas S."/>
            <person name="Lapidus A."/>
            <person name="Goltsman E."/>
            <person name="Mazur M."/>
            <person name="Pusch G.D."/>
            <person name="Fonstein M."/>
            <person name="Overbeek R."/>
            <person name="Kyprides N."/>
            <person name="Purnelle B."/>
            <person name="Prozzi D."/>
            <person name="Ngui K."/>
            <person name="Masuy D."/>
            <person name="Hancy F."/>
            <person name="Burteau S."/>
            <person name="Boutry M."/>
            <person name="Delcour J."/>
            <person name="Goffeau A."/>
            <person name="Hols P."/>
        </authorList>
    </citation>
    <scope>NUCLEOTIDE SEQUENCE [LARGE SCALE GENOMIC DNA]</scope>
    <source>
        <strain>CNRZ 1066</strain>
    </source>
</reference>